<accession>Q28203</accession>
<accession>A7YWS9</accession>
<organism>
    <name type="scientific">Bos taurus</name>
    <name type="common">Bovine</name>
    <dbReference type="NCBI Taxonomy" id="9913"/>
    <lineage>
        <taxon>Eukaryota</taxon>
        <taxon>Metazoa</taxon>
        <taxon>Chordata</taxon>
        <taxon>Craniata</taxon>
        <taxon>Vertebrata</taxon>
        <taxon>Euteleostomi</taxon>
        <taxon>Mammalia</taxon>
        <taxon>Eutheria</taxon>
        <taxon>Laurasiatheria</taxon>
        <taxon>Artiodactyla</taxon>
        <taxon>Ruminantia</taxon>
        <taxon>Pecora</taxon>
        <taxon>Bovidae</taxon>
        <taxon>Bovinae</taxon>
        <taxon>Bos</taxon>
    </lineage>
</organism>
<sequence length="280" mass="31062">MVRLPLQCLFWGFFLTAVHSEPATACGEKQYPVNSLCCDLCPPGQKLVNDCTEVSKTECQSCGKGEFLSTWNREKYCHEHRYCNPNLGLRIQSEGTLNTDTTCVCVEGQHCTSHTCESCTPHSLCLPGFGVKQIATGLLDTVCEPCPLGFFSNVSSAFEKCHRWTSCERKGLVEQHVGTNKTDVVCGFQSRMRTLVVIPVTMGVLFAVLLVSACIRNITKKRQAKALHPTAERQDPVETIDPEDFPGPHPPPPVQETLCWCQPVAQEDGKESRISVQERE</sequence>
<name>TNR5_BOVIN</name>
<evidence type="ECO:0000250" key="1"/>
<evidence type="ECO:0000250" key="2">
    <source>
        <dbReference type="UniProtKB" id="P25942"/>
    </source>
</evidence>
<evidence type="ECO:0000250" key="3">
    <source>
        <dbReference type="UniProtKB" id="P27512"/>
    </source>
</evidence>
<evidence type="ECO:0000255" key="4"/>
<evidence type="ECO:0000255" key="5">
    <source>
        <dbReference type="PROSITE-ProRule" id="PRU00206"/>
    </source>
</evidence>
<evidence type="ECO:0000256" key="6">
    <source>
        <dbReference type="SAM" id="MobiDB-lite"/>
    </source>
</evidence>
<evidence type="ECO:0000305" key="7"/>
<comment type="function">
    <text evidence="2 3">Receptor for TNFSF5/CD40LG (By similarity). Transduces TRAF6- and MAP3K8-mediated signals that activate ERK in macrophages and B cells, leading to induction of immunoglobulin secretion (By similarity).</text>
</comment>
<comment type="subunit">
    <text evidence="1">Monomer and homodimer. Interacts with TRAF1, TRAF2, TRAF3, TRAF5 and TRAF6. Interacts with TRAF6 and MAP3K8; the interaction is required for ERK activation (By similarity).</text>
</comment>
<comment type="subcellular location">
    <subcellularLocation>
        <location>Membrane</location>
        <topology>Single-pass type I membrane protein</topology>
    </subcellularLocation>
</comment>
<comment type="sequence caution" evidence="7">
    <conflict type="frameshift">
        <sequence resource="EMBL-CDS" id="AAC48710"/>
    </conflict>
</comment>
<feature type="signal peptide" evidence="4">
    <location>
        <begin position="1"/>
        <end position="20"/>
    </location>
</feature>
<feature type="chain" id="PRO_0000034557" description="Tumor necrosis factor receptor superfamily member 5">
    <location>
        <begin position="21"/>
        <end position="280"/>
    </location>
</feature>
<feature type="topological domain" description="Extracellular" evidence="4">
    <location>
        <begin position="21"/>
        <end position="194"/>
    </location>
</feature>
<feature type="transmembrane region" description="Helical" evidence="4">
    <location>
        <begin position="195"/>
        <end position="215"/>
    </location>
</feature>
<feature type="topological domain" description="Cytoplasmic" evidence="4">
    <location>
        <begin position="216"/>
        <end position="280"/>
    </location>
</feature>
<feature type="repeat" description="TNFR-Cys 1">
    <location>
        <begin position="25"/>
        <end position="60"/>
    </location>
</feature>
<feature type="repeat" description="TNFR-Cys 2">
    <location>
        <begin position="61"/>
        <end position="103"/>
    </location>
</feature>
<feature type="repeat" description="TNFR-Cys 3">
    <location>
        <begin position="104"/>
        <end position="144"/>
    </location>
</feature>
<feature type="repeat" description="TNFR-Cys 4">
    <location>
        <begin position="145"/>
        <end position="187"/>
    </location>
</feature>
<feature type="region of interest" description="Disordered" evidence="6">
    <location>
        <begin position="225"/>
        <end position="252"/>
    </location>
</feature>
<feature type="glycosylation site" description="N-linked (GlcNAc...) asparagine" evidence="4">
    <location>
        <position position="153"/>
    </location>
</feature>
<feature type="glycosylation site" description="N-linked (GlcNAc...) asparagine" evidence="4">
    <location>
        <position position="180"/>
    </location>
</feature>
<feature type="disulfide bond" evidence="5">
    <location>
        <begin position="26"/>
        <end position="37"/>
    </location>
</feature>
<feature type="disulfide bond" evidence="5">
    <location>
        <begin position="38"/>
        <end position="51"/>
    </location>
</feature>
<feature type="disulfide bond" evidence="5">
    <location>
        <begin position="41"/>
        <end position="59"/>
    </location>
</feature>
<feature type="disulfide bond" evidence="5">
    <location>
        <begin position="62"/>
        <end position="77"/>
    </location>
</feature>
<feature type="disulfide bond" evidence="5">
    <location>
        <begin position="83"/>
        <end position="103"/>
    </location>
</feature>
<feature type="disulfide bond" evidence="5">
    <location>
        <begin position="105"/>
        <end position="119"/>
    </location>
</feature>
<feature type="disulfide bond" evidence="5">
    <location>
        <begin position="111"/>
        <end position="116"/>
    </location>
</feature>
<feature type="disulfide bond" evidence="5">
    <location>
        <begin position="125"/>
        <end position="143"/>
    </location>
</feature>
<feature type="sequence conflict" description="In Ref. 2; AAC48710." evidence="7" ref="2">
    <original>T</original>
    <variation>I</variation>
    <location>
        <position position="102"/>
    </location>
</feature>
<feature type="sequence conflict" description="In Ref. 2; AAC48710." evidence="7" ref="2">
    <original>T</original>
    <variation>M</variation>
    <location>
        <position position="230"/>
    </location>
</feature>
<proteinExistence type="evidence at transcript level"/>
<protein>
    <recommendedName>
        <fullName>Tumor necrosis factor receptor superfamily member 5</fullName>
    </recommendedName>
    <alternativeName>
        <fullName>B-cell surface antigen CD40</fullName>
    </alternativeName>
    <alternativeName>
        <fullName>CD40L receptor</fullName>
    </alternativeName>
    <cdAntigenName>CD40</cdAntigenName>
</protein>
<keyword id="KW-1015">Disulfide bond</keyword>
<keyword id="KW-0325">Glycoprotein</keyword>
<keyword id="KW-0391">Immunity</keyword>
<keyword id="KW-0472">Membrane</keyword>
<keyword id="KW-0675">Receptor</keyword>
<keyword id="KW-1185">Reference proteome</keyword>
<keyword id="KW-0677">Repeat</keyword>
<keyword id="KW-0732">Signal</keyword>
<keyword id="KW-0812">Transmembrane</keyword>
<keyword id="KW-1133">Transmembrane helix</keyword>
<reference key="1">
    <citation type="submission" date="2007-03" db="EMBL/GenBank/DDBJ databases">
        <authorList>
            <consortium name="NIH - Mammalian Gene Collection (MGC) project"/>
        </authorList>
    </citation>
    <scope>NUCLEOTIDE SEQUENCE [LARGE SCALE MRNA]</scope>
    <source>
        <strain>Hereford</strain>
        <tissue>Thymus</tissue>
    </source>
</reference>
<reference key="2">
    <citation type="journal article" date="1997" name="Immunology">
        <title>Cloning, expression and biological function of the bovine CD40 homologue: role in B-lymphocyte growth and differentiation in cattle.</title>
        <authorList>
            <person name="Hirano A."/>
            <person name="Brown W.C."/>
            <person name="Estes D.M."/>
        </authorList>
    </citation>
    <scope>NUCLEOTIDE SEQUENCE [MRNA] OF 1-270</scope>
    <source>
        <tissue>Peripheral blood lymphocyte</tissue>
    </source>
</reference>
<dbReference type="EMBL" id="BC134765">
    <property type="protein sequence ID" value="AAI34766.1"/>
    <property type="molecule type" value="mRNA"/>
</dbReference>
<dbReference type="EMBL" id="U57745">
    <property type="protein sequence ID" value="AAC48710.1"/>
    <property type="status" value="ALT_FRAME"/>
    <property type="molecule type" value="mRNA"/>
</dbReference>
<dbReference type="RefSeq" id="NP_001099081.1">
    <property type="nucleotide sequence ID" value="NM_001105611.2"/>
</dbReference>
<dbReference type="SMR" id="Q28203"/>
<dbReference type="FunCoup" id="Q28203">
    <property type="interactions" value="465"/>
</dbReference>
<dbReference type="STRING" id="9913.ENSBTAP00000027630"/>
<dbReference type="GlyCosmos" id="Q28203">
    <property type="glycosylation" value="2 sites, No reported glycans"/>
</dbReference>
<dbReference type="GlyGen" id="Q28203">
    <property type="glycosylation" value="2 sites"/>
</dbReference>
<dbReference type="PaxDb" id="9913-ENSBTAP00000027630"/>
<dbReference type="GeneID" id="286849"/>
<dbReference type="KEGG" id="bta:286849"/>
<dbReference type="CTD" id="958"/>
<dbReference type="VEuPathDB" id="HostDB:ENSBTAG00000020736"/>
<dbReference type="eggNOG" id="ENOG502S5TQ">
    <property type="taxonomic scope" value="Eukaryota"/>
</dbReference>
<dbReference type="InParanoid" id="Q28203"/>
<dbReference type="OMA" id="WTKERHC"/>
<dbReference type="OrthoDB" id="9932129at2759"/>
<dbReference type="Reactome" id="R-BTA-198933">
    <property type="pathway name" value="Immunoregulatory interactions between a Lymphoid and a non-Lymphoid cell"/>
</dbReference>
<dbReference type="Reactome" id="R-BTA-5668541">
    <property type="pathway name" value="TNFR2 non-canonical NF-kB pathway"/>
</dbReference>
<dbReference type="Reactome" id="R-BTA-5676594">
    <property type="pathway name" value="TNF receptor superfamily (TNFSF) members mediating non-canonical NF-kB pathway"/>
</dbReference>
<dbReference type="Proteomes" id="UP000009136">
    <property type="component" value="Chromosome 13"/>
</dbReference>
<dbReference type="Bgee" id="ENSBTAG00000020736">
    <property type="expression patterns" value="Expressed in retropharyngeal lymph node and 98 other cell types or tissues"/>
</dbReference>
<dbReference type="GO" id="GO:0035631">
    <property type="term" value="C:CD40 receptor complex"/>
    <property type="evidence" value="ECO:0000318"/>
    <property type="project" value="GO_Central"/>
</dbReference>
<dbReference type="GO" id="GO:0009897">
    <property type="term" value="C:external side of plasma membrane"/>
    <property type="evidence" value="ECO:0000318"/>
    <property type="project" value="GO_Central"/>
</dbReference>
<dbReference type="GO" id="GO:0038023">
    <property type="term" value="F:signaling receptor activity"/>
    <property type="evidence" value="ECO:0007669"/>
    <property type="project" value="InterPro"/>
</dbReference>
<dbReference type="GO" id="GO:0042113">
    <property type="term" value="P:B cell activation"/>
    <property type="evidence" value="ECO:0000318"/>
    <property type="project" value="GO_Central"/>
</dbReference>
<dbReference type="GO" id="GO:0002768">
    <property type="term" value="P:immune response-regulating cell surface receptor signaling pathway"/>
    <property type="evidence" value="ECO:0000318"/>
    <property type="project" value="GO_Central"/>
</dbReference>
<dbReference type="CDD" id="cd13407">
    <property type="entry name" value="TNFRSF5"/>
    <property type="match status" value="1"/>
</dbReference>
<dbReference type="FunFam" id="2.10.50.10:FF:000041">
    <property type="entry name" value="Tumor necrosis factor receptor superfamily member 5"/>
    <property type="match status" value="1"/>
</dbReference>
<dbReference type="Gene3D" id="2.10.50.10">
    <property type="entry name" value="Tumor Necrosis Factor Receptor, subunit A, domain 2"/>
    <property type="match status" value="2"/>
</dbReference>
<dbReference type="InterPro" id="IPR001368">
    <property type="entry name" value="TNFR/NGFR_Cys_rich_reg"/>
</dbReference>
<dbReference type="InterPro" id="IPR020435">
    <property type="entry name" value="TNFR_5"/>
</dbReference>
<dbReference type="InterPro" id="IPR052135">
    <property type="entry name" value="TNFRSF5"/>
</dbReference>
<dbReference type="InterPro" id="IPR034021">
    <property type="entry name" value="TNFRSF5_N"/>
</dbReference>
<dbReference type="PANTHER" id="PTHR46875">
    <property type="entry name" value="TUMOR NECROSIS FACTOR RECEPTOR SUPERFAMILY MEMBER 5"/>
    <property type="match status" value="1"/>
</dbReference>
<dbReference type="PANTHER" id="PTHR46875:SF1">
    <property type="entry name" value="TUMOR NECROSIS FACTOR RECEPTOR SUPERFAMILY MEMBER 5"/>
    <property type="match status" value="1"/>
</dbReference>
<dbReference type="Pfam" id="PF00020">
    <property type="entry name" value="TNFR_c6"/>
    <property type="match status" value="1"/>
</dbReference>
<dbReference type="PRINTS" id="PR01922">
    <property type="entry name" value="TNFACTORR5"/>
</dbReference>
<dbReference type="SMART" id="SM00208">
    <property type="entry name" value="TNFR"/>
    <property type="match status" value="4"/>
</dbReference>
<dbReference type="SUPFAM" id="SSF57586">
    <property type="entry name" value="TNF receptor-like"/>
    <property type="match status" value="2"/>
</dbReference>
<dbReference type="PROSITE" id="PS00652">
    <property type="entry name" value="TNFR_NGFR_1"/>
    <property type="match status" value="1"/>
</dbReference>
<dbReference type="PROSITE" id="PS50050">
    <property type="entry name" value="TNFR_NGFR_2"/>
    <property type="match status" value="1"/>
</dbReference>
<gene>
    <name type="primary">CD40</name>
    <name type="synonym">TNFRSF5</name>
</gene>